<organism>
    <name type="scientific">Escherichia coli (strain K12)</name>
    <dbReference type="NCBI Taxonomy" id="83333"/>
    <lineage>
        <taxon>Bacteria</taxon>
        <taxon>Pseudomonadati</taxon>
        <taxon>Pseudomonadota</taxon>
        <taxon>Gammaproteobacteria</taxon>
        <taxon>Enterobacterales</taxon>
        <taxon>Enterobacteriaceae</taxon>
        <taxon>Escherichia</taxon>
    </lineage>
</organism>
<dbReference type="EC" id="2.4.1.-" evidence="2"/>
<dbReference type="EMBL" id="M80599">
    <property type="protein sequence ID" value="AAA24082.1"/>
    <property type="molecule type" value="Genomic_DNA"/>
</dbReference>
<dbReference type="EMBL" id="M86305">
    <property type="protein sequence ID" value="AAA03743.2"/>
    <property type="molecule type" value="Genomic_DNA"/>
</dbReference>
<dbReference type="EMBL" id="U00039">
    <property type="protein sequence ID" value="AAB18608.1"/>
    <property type="molecule type" value="Genomic_DNA"/>
</dbReference>
<dbReference type="EMBL" id="U00096">
    <property type="protein sequence ID" value="AAC76655.1"/>
    <property type="molecule type" value="Genomic_DNA"/>
</dbReference>
<dbReference type="EMBL" id="AP009048">
    <property type="protein sequence ID" value="BAE77661.1"/>
    <property type="molecule type" value="Genomic_DNA"/>
</dbReference>
<dbReference type="EMBL" id="S75736">
    <property type="protein sequence ID" value="AAD43826.1"/>
    <property type="molecule type" value="Genomic_DNA"/>
</dbReference>
<dbReference type="PIR" id="B42595">
    <property type="entry name" value="B42595"/>
</dbReference>
<dbReference type="RefSeq" id="NP_418088.1">
    <property type="nucleotide sequence ID" value="NC_000913.3"/>
</dbReference>
<dbReference type="RefSeq" id="WP_000634283.1">
    <property type="nucleotide sequence ID" value="NZ_LN832404.1"/>
</dbReference>
<dbReference type="PDB" id="2IV7">
    <property type="method" value="X-ray"/>
    <property type="resolution" value="1.60 A"/>
    <property type="chains" value="A=1-374"/>
</dbReference>
<dbReference type="PDB" id="2IW1">
    <property type="method" value="X-ray"/>
    <property type="resolution" value="1.50 A"/>
    <property type="chains" value="A=1-374"/>
</dbReference>
<dbReference type="PDB" id="2N58">
    <property type="method" value="NMR"/>
    <property type="chains" value="A=103-132"/>
</dbReference>
<dbReference type="PDBsum" id="2IV7"/>
<dbReference type="PDBsum" id="2IW1"/>
<dbReference type="PDBsum" id="2N58"/>
<dbReference type="BMRB" id="P25740"/>
<dbReference type="SMR" id="P25740"/>
<dbReference type="BioGRID" id="4260869">
    <property type="interactions" value="283"/>
</dbReference>
<dbReference type="FunCoup" id="P25740">
    <property type="interactions" value="108"/>
</dbReference>
<dbReference type="IntAct" id="P25740">
    <property type="interactions" value="10"/>
</dbReference>
<dbReference type="STRING" id="511145.b3631"/>
<dbReference type="CAZy" id="GT4">
    <property type="family name" value="Glycosyltransferase Family 4"/>
</dbReference>
<dbReference type="jPOST" id="P25740"/>
<dbReference type="PaxDb" id="511145-b3631"/>
<dbReference type="EnsemblBacteria" id="AAC76655">
    <property type="protein sequence ID" value="AAC76655"/>
    <property type="gene ID" value="b3631"/>
</dbReference>
<dbReference type="GeneID" id="948149"/>
<dbReference type="KEGG" id="ecj:JW3606"/>
<dbReference type="KEGG" id="eco:b3631"/>
<dbReference type="KEGG" id="ecoc:C3026_19680"/>
<dbReference type="PATRIC" id="fig|1411691.4.peg.3075"/>
<dbReference type="EchoBASE" id="EB1315"/>
<dbReference type="eggNOG" id="COG0438">
    <property type="taxonomic scope" value="Bacteria"/>
</dbReference>
<dbReference type="HOGENOM" id="CLU_009583_44_2_6"/>
<dbReference type="InParanoid" id="P25740"/>
<dbReference type="OMA" id="DGVHRRW"/>
<dbReference type="OrthoDB" id="9802524at2"/>
<dbReference type="PhylomeDB" id="P25740"/>
<dbReference type="BioCyc" id="EcoCyc:EG11339-MONOMER"/>
<dbReference type="BioCyc" id="MetaCyc:EG11339-MONOMER"/>
<dbReference type="BRENDA" id="2.4.1.B64">
    <property type="organism ID" value="2026"/>
</dbReference>
<dbReference type="UniPathway" id="UPA00958"/>
<dbReference type="EvolutionaryTrace" id="P25740"/>
<dbReference type="PRO" id="PR:P25740"/>
<dbReference type="Proteomes" id="UP000000625">
    <property type="component" value="Chromosome"/>
</dbReference>
<dbReference type="GO" id="GO:0005886">
    <property type="term" value="C:plasma membrane"/>
    <property type="evidence" value="ECO:0007669"/>
    <property type="project" value="UniProtKB-SubCell"/>
</dbReference>
<dbReference type="GO" id="GO:0016757">
    <property type="term" value="F:glycosyltransferase activity"/>
    <property type="evidence" value="ECO:0000318"/>
    <property type="project" value="GO_Central"/>
</dbReference>
<dbReference type="GO" id="GO:0008919">
    <property type="term" value="F:lipopolysaccharide glucosyltransferase I activity"/>
    <property type="evidence" value="ECO:0000314"/>
    <property type="project" value="EcoCyc"/>
</dbReference>
<dbReference type="GO" id="GO:0009244">
    <property type="term" value="P:lipopolysaccharide core region biosynthetic process"/>
    <property type="evidence" value="ECO:0000315"/>
    <property type="project" value="EcoCyc"/>
</dbReference>
<dbReference type="CDD" id="cd03801">
    <property type="entry name" value="GT4_PimA-like"/>
    <property type="match status" value="1"/>
</dbReference>
<dbReference type="Gene3D" id="3.40.50.2000">
    <property type="entry name" value="Glycogen Phosphorylase B"/>
    <property type="match status" value="2"/>
</dbReference>
<dbReference type="InterPro" id="IPR001296">
    <property type="entry name" value="Glyco_trans_1"/>
</dbReference>
<dbReference type="InterPro" id="IPR028098">
    <property type="entry name" value="Glyco_trans_4-like_N"/>
</dbReference>
<dbReference type="PANTHER" id="PTHR12526">
    <property type="entry name" value="GLYCOSYLTRANSFERASE"/>
    <property type="match status" value="1"/>
</dbReference>
<dbReference type="PANTHER" id="PTHR12526:SF641">
    <property type="entry name" value="LIPOPOLYSACCHARIDE CORE BIOSYNTHESIS PROTEIN RFAG"/>
    <property type="match status" value="1"/>
</dbReference>
<dbReference type="Pfam" id="PF13439">
    <property type="entry name" value="Glyco_transf_4"/>
    <property type="match status" value="1"/>
</dbReference>
<dbReference type="Pfam" id="PF00534">
    <property type="entry name" value="Glycos_transf_1"/>
    <property type="match status" value="1"/>
</dbReference>
<dbReference type="SUPFAM" id="SSF53756">
    <property type="entry name" value="UDP-Glycosyltransferase/glycogen phosphorylase"/>
    <property type="match status" value="1"/>
</dbReference>
<sequence length="374" mass="42284">MIVAFCLYKYFPFGGLQRDFMRIASTVAARGHHVRVYTQSWEGDCPKAFELIQVPVKSHTNHGRNAEYYAWVQNHLKEHPADRVVGFNKMPGLDVYFAADVCYAEKVAQEKGFLYRLTSRYRHYAAFERATFEQGKSTKLMMLTDKQIADFQKHYQTEPERFQILPPGIYPDRKYSEQIPNSREIYRQKNGIKEQQNLLLQVGSDFGRKGVDRSIEALASLPESLRHNTLLFVVGQDKPRKFEALAEKLGVRSNVHFFSGRNDVSELMAAADLLLHPAYQEAAGIVLLEAITAGLPVLTTAVCGYAHYIADANCGTVIAEPFSQEQLNEVLRKALTQSPLRMAWAENARHYADTQDLYSLPEKAADIITGGLDG</sequence>
<gene>
    <name evidence="8" type="primary">waaG</name>
    <name type="synonym">pcsA</name>
    <name evidence="7" type="synonym">rfaG</name>
    <name type="ordered locus">b3631</name>
    <name type="ordered locus">JW3606</name>
</gene>
<comment type="function">
    <text evidence="1 2">Glucosyltransferase involved in the biosynthesis of the core oligosaccharide region of lipopolysaccharide (LPS) (PubMed:10986272, PubMed:24479701). Catalyzes the addition of the first outer-core glucose from UDP-glucose to the inner-core heptose II (PubMed:24479701). Cannot use other sugar donors, such as UDP-galactose, UDP-glucuronic acid, UDP-galacuronic acid, GDP-mannose, ADP-glucose and GDP-glucose (PubMed:24479701). In the absence of a lipid acceptor, can slowly hydrolyze UDP-glucose (PubMed:24479701).</text>
</comment>
<comment type="activity regulation">
    <text evidence="2">Inhibited by divalent metal ions such as Mg(2+), Mn(2+), Ca(2+), Zn(2+), Co(2+), Ni(2+) and Cu(2+).</text>
</comment>
<comment type="biophysicochemical properties">
    <kinetics>
        <KM evidence="2">0.162 mM for UDP-glucose</KM>
        <KM evidence="2">3.6 mM for UDP-glucose (for hydrolysis reaction)</KM>
        <KM evidence="2">3.85 uM for heptose2-1-dephosphorylated-Kdo2-lipid A</KM>
        <text evidence="2">kcat is 0.5 sec(-1) with UDP-glucose and heptose2-1-dephosphorylated-Kdo2-lipid A as substrates (PubMed:24479701). kcat is 0.014 sec(-1) for UDP-glucose hydrolysis (PubMed:24479701).</text>
    </kinetics>
</comment>
<comment type="pathway">
    <text evidence="1 2">Bacterial outer membrane biogenesis; LPS core biosynthesis.</text>
</comment>
<comment type="subcellular location">
    <subcellularLocation>
        <location evidence="11 12">Cell inner membrane</location>
        <topology evidence="5">Peripheral membrane protein</topology>
        <orientation evidence="11">Cytoplasmic side</orientation>
    </subcellularLocation>
    <text evidence="3 5">Binds membranes via electrostatic interactions (PubMed:26244737, PubMed:29225173). Interaction with the membrane is conferred at least in part by the N-terminal positively charged and largely alpha-helical membrane-interacting region (MIR-WaaG) (PubMed:26244737).</text>
</comment>
<comment type="disruption phenotype">
    <text evidence="1 4">Deletion mutant synthesizes shorter LPS, truncated immediately after the inner core heptose residues (PubMed:10986272, PubMed:27214006). Mutant cannot produce flagella, demonstrating that flagella assembly in E.coli depends on the length of LPS (PubMed:27214006). Mutation results in a complete lack of phosphate groups on heptose II and in only 40% phosphate substitution at heptose I, which destabilizes the outer membrane (PubMed:10986272). It causes a slight increase in susceptibility to novobiocin and a major increase in susceptibility to SDS (PubMed:10986272).</text>
</comment>
<comment type="biotechnology">
    <text evidence="6">Identified as a drug target because if its activity could be inhibited, the integrity of the outer membrane would be compromised and the bacterium would be susceptible to antibiotics which are normally prevented from entering the cell (PubMed:35215321). A selection of compounds was studied by molecular dynamics (MD) simulations to identify molecules that can act as inhibitors (PubMed:35215321).</text>
</comment>
<comment type="miscellaneous">
    <text evidence="2">For the in vitro assay, an inner core analog, heptose2-1-dephosphorylated-Kdo2-lipid A (Hep2-1-deP-KLA), was prepared and used as the acceptor substrate.</text>
</comment>
<comment type="similarity">
    <text evidence="9">Belongs to the glycosyltransferase group 1 family. Glycosyltransferase 4 subfamily.</text>
</comment>
<proteinExistence type="evidence at protein level"/>
<reference key="1">
    <citation type="journal article" date="1992" name="J. Bacteriol.">
        <title>Identification and sequences of the lipopolysaccharide core biosynthetic genes rfaQ, rfaP, and rfaG of Escherichia coli K-12.</title>
        <authorList>
            <person name="Parker C.T."/>
            <person name="Pradel E."/>
            <person name="Schnaitman C.A."/>
        </authorList>
    </citation>
    <scope>NUCLEOTIDE SEQUENCE [GENOMIC DNA]</scope>
    <source>
        <strain>K12</strain>
    </source>
</reference>
<reference key="2">
    <citation type="journal article" date="1994" name="Nucleic Acids Res.">
        <title>Analysis of the Escherichia coli genome. V. DNA sequence of the region from 76.0 to 81.5 minutes.</title>
        <authorList>
            <person name="Sofia H.J."/>
            <person name="Burland V."/>
            <person name="Daniels D.L."/>
            <person name="Plunkett G. III"/>
            <person name="Blattner F.R."/>
        </authorList>
    </citation>
    <scope>NUCLEOTIDE SEQUENCE [LARGE SCALE GENOMIC DNA]</scope>
    <source>
        <strain>K12 / MG1655 / ATCC 47076</strain>
    </source>
</reference>
<reference key="3">
    <citation type="journal article" date="1997" name="Science">
        <title>The complete genome sequence of Escherichia coli K-12.</title>
        <authorList>
            <person name="Blattner F.R."/>
            <person name="Plunkett G. III"/>
            <person name="Bloch C.A."/>
            <person name="Perna N.T."/>
            <person name="Burland V."/>
            <person name="Riley M."/>
            <person name="Collado-Vides J."/>
            <person name="Glasner J.D."/>
            <person name="Rode C.K."/>
            <person name="Mayhew G.F."/>
            <person name="Gregor J."/>
            <person name="Davis N.W."/>
            <person name="Kirkpatrick H.A."/>
            <person name="Goeden M.A."/>
            <person name="Rose D.J."/>
            <person name="Mau B."/>
            <person name="Shao Y."/>
        </authorList>
    </citation>
    <scope>NUCLEOTIDE SEQUENCE [LARGE SCALE GENOMIC DNA]</scope>
    <source>
        <strain>K12 / MG1655 / ATCC 47076</strain>
    </source>
</reference>
<reference key="4">
    <citation type="journal article" date="2006" name="Mol. Syst. Biol.">
        <title>Highly accurate genome sequences of Escherichia coli K-12 strains MG1655 and W3110.</title>
        <authorList>
            <person name="Hayashi K."/>
            <person name="Morooka N."/>
            <person name="Yamamoto Y."/>
            <person name="Fujita K."/>
            <person name="Isono K."/>
            <person name="Choi S."/>
            <person name="Ohtsubo E."/>
            <person name="Baba T."/>
            <person name="Wanner B.L."/>
            <person name="Mori H."/>
            <person name="Horiuchi T."/>
        </authorList>
    </citation>
    <scope>NUCLEOTIDE SEQUENCE [LARGE SCALE GENOMIC DNA]</scope>
    <source>
        <strain>K12 / W3110 / ATCC 27325 / DSM 5911</strain>
    </source>
</reference>
<reference key="5">
    <citation type="journal article" date="1992" name="J. Bacteriol.">
        <title>The gene coding for 3-deoxy-manno-octulosonic acid transferase and the rfaQ gene are transcribed from divergently arranged promoters in Escherichia coli.</title>
        <authorList>
            <person name="Clementz T."/>
        </authorList>
    </citation>
    <scope>NUCLEOTIDE SEQUENCE [GENOMIC DNA] OF 1-217</scope>
</reference>
<reference key="6">
    <citation type="journal article" date="1994" name="FEMS Microbiol. Lett.">
        <title>Identification by Tn10 transposon mutagenesis of host factors involved in the biosynthesis of K99 fimbriae of Escherichia coli: effect of LPS core mutations.</title>
        <authorList>
            <person name="Pilipcinec E."/>
            <person name="Huisman T.T."/>
            <person name="Willemsen P.T."/>
            <person name="Appelmelk B.J."/>
            <person name="Graaf F.K."/>
            <person name="Oudega B."/>
        </authorList>
    </citation>
    <scope>NUCLEOTIDE SEQUENCE [GENOMIC DNA] OF 1-58</scope>
</reference>
<reference key="7">
    <citation type="journal article" date="1996" name="Trends Microbiol.">
        <title>Bacterial polysaccharide synthesis and gene nomenclature.</title>
        <authorList>
            <person name="Reeves P.R."/>
            <person name="Hobbs M."/>
            <person name="Valvano M.A."/>
            <person name="Skurnik M."/>
            <person name="Whitfield C."/>
            <person name="Coplin D."/>
            <person name="Kido N."/>
            <person name="Klena J."/>
            <person name="Maskell D."/>
            <person name="Raetz C.R.H."/>
            <person name="Rick P.D."/>
        </authorList>
    </citation>
    <scope>NOMENCLATURE</scope>
</reference>
<reference key="8">
    <citation type="journal article" date="2000" name="J. Bacteriol.">
        <title>Mutation of the lipopolysaccharide core glycosyltransferase encoded by waaG destabilizes the outer membrane of Escherichia coli by interfering with core phosphorylation.</title>
        <authorList>
            <person name="Yethon J.A."/>
            <person name="Vinogradov E."/>
            <person name="Perry M.B."/>
            <person name="Whitfield C."/>
        </authorList>
    </citation>
    <scope>FUNCTION</scope>
    <scope>PATHWAY</scope>
    <scope>DISRUPTION PHENOTYPE</scope>
    <source>
        <strain>F470</strain>
    </source>
</reference>
<reference key="9">
    <citation type="journal article" date="2014" name="Biochemistry">
        <title>In vitro assembly of the outer core of the lipopolysaccharide from Escherichia coli K-12 and Salmonella typhimurium.</title>
        <authorList>
            <person name="Qian J."/>
            <person name="Garrett T.A."/>
            <person name="Raetz C.R."/>
        </authorList>
    </citation>
    <scope>FUNCTION</scope>
    <scope>CATALYTIC ACTIVITY</scope>
    <scope>ACTIVITY REGULATION</scope>
    <scope>BIOPHYSICOCHEMICAL PROPERTIES</scope>
    <scope>PATHWAY</scope>
    <source>
        <strain>K12 / W3110 / ATCC 27325 / DSM 5911</strain>
    </source>
</reference>
<reference key="10">
    <citation type="journal article" date="2016" name="J. Basic Microbiol.">
        <title>Deletion of the genes waaC, waaF, or waaG in Escherichia coli W3110 disables the flagella biosynthesis.</title>
        <authorList>
            <person name="Wang Z."/>
            <person name="Wang J."/>
            <person name="Ren G."/>
            <person name="Li Y."/>
            <person name="Wang X."/>
        </authorList>
    </citation>
    <scope>DISRUPTION PHENOTYPE</scope>
    <source>
        <strain>K12 / W3110 / ATCC 27325 / DSM 5911</strain>
    </source>
</reference>
<reference key="11">
    <citation type="journal article" date="2018" name="Biochim. Biophys. Acta">
        <title>New insights into the membrane association mechanism of the glycosyltransferase WaaG from Escherichia coli.</title>
        <authorList>
            <person name="Liebau J."/>
            <person name="Fu B."/>
            <person name="Brown C."/>
            <person name="Maeler L."/>
        </authorList>
    </citation>
    <scope>SUBCELLULAR LOCATION</scope>
</reference>
<reference key="12">
    <citation type="journal article" date="2022" name="Pharmaceuticals (Basel)">
        <title>A lead-based fragment library screening of the glycosyltransferase WaaG from Escherichia coli.</title>
        <authorList>
            <person name="Riu F."/>
            <person name="Ruda A."/>
            <person name="Engstroem O."/>
            <person name="Muheim C."/>
            <person name="Mobarak H."/>
            <person name="Staahle J."/>
            <person name="Kosma P."/>
            <person name="Carta A."/>
            <person name="Daley D.O."/>
            <person name="Widmalm G."/>
        </authorList>
    </citation>
    <scope>BIOTECHNOLOGY</scope>
</reference>
<reference evidence="13 14" key="13">
    <citation type="journal article" date="2006" name="Chem. Biol.">
        <title>Insights into the synthesis of lipopolysaccharide and antibiotics through the structures of two retaining glycosyltransferases from family GT4.</title>
        <authorList>
            <person name="Martinez-Fleites C."/>
            <person name="Proctor M."/>
            <person name="Roberts S."/>
            <person name="Bolam D.N."/>
            <person name="Gilbert H.J."/>
            <person name="Davies G.J."/>
        </authorList>
    </citation>
    <scope>X-RAY CRYSTALLOGRAPHY (1.50 ANGSTROMS) IN COMPLEXES WITH UDP AND UDP-2-DEOXY-2-FLUORO-ALPHA-D-GLUCOSE</scope>
    <source>
        <strain>K12 / W3110 / ATCC 27325 / DSM 5911</strain>
    </source>
</reference>
<reference evidence="15" key="14">
    <citation type="journal article" date="2015" name="Biophys. J.">
        <title>Membrane Interaction of the Glycosyltransferase WaaG.</title>
        <authorList>
            <person name="Liebau J."/>
            <person name="Pettersson P."/>
            <person name="Szpryngiel S."/>
            <person name="Maler L."/>
        </authorList>
    </citation>
    <scope>STRUCTURE BY NMR OF 103-132</scope>
    <scope>SUBCELLULAR LOCATION</scope>
</reference>
<accession>P25740</accession>
<accession>Q2M7U5</accession>
<protein>
    <recommendedName>
        <fullName evidence="9">Lipopolysaccharide glucosyltransferase WaaG</fullName>
        <ecNumber evidence="2">2.4.1.-</ecNumber>
    </recommendedName>
    <alternativeName>
        <fullName evidence="9">Lipopolysaccharide glucosyltransferase I</fullName>
    </alternativeName>
    <alternativeName>
        <fullName evidence="9">UDP-glucose:(heptosyl)lipopolysaccharide glucosyltransferase</fullName>
    </alternativeName>
</protein>
<name>WAAG_ECOLI</name>
<keyword id="KW-0002">3D-structure</keyword>
<keyword id="KW-0997">Cell inner membrane</keyword>
<keyword id="KW-1003">Cell membrane</keyword>
<keyword id="KW-0328">Glycosyltransferase</keyword>
<keyword id="KW-0448">Lipopolysaccharide biosynthesis</keyword>
<keyword id="KW-0472">Membrane</keyword>
<keyword id="KW-1185">Reference proteome</keyword>
<keyword id="KW-0808">Transferase</keyword>
<evidence type="ECO:0000269" key="1">
    <source>
    </source>
</evidence>
<evidence type="ECO:0000269" key="2">
    <source>
    </source>
</evidence>
<evidence type="ECO:0000269" key="3">
    <source>
    </source>
</evidence>
<evidence type="ECO:0000269" key="4">
    <source>
    </source>
</evidence>
<evidence type="ECO:0000269" key="5">
    <source>
    </source>
</evidence>
<evidence type="ECO:0000269" key="6">
    <source>
    </source>
</evidence>
<evidence type="ECO:0000303" key="7">
    <source>
    </source>
</evidence>
<evidence type="ECO:0000303" key="8">
    <source>
    </source>
</evidence>
<evidence type="ECO:0000305" key="9"/>
<evidence type="ECO:0000305" key="10">
    <source>
    </source>
</evidence>
<evidence type="ECO:0000305" key="11">
    <source>
    </source>
</evidence>
<evidence type="ECO:0000305" key="12">
    <source>
    </source>
</evidence>
<evidence type="ECO:0007744" key="13">
    <source>
        <dbReference type="PDB" id="2IV7"/>
    </source>
</evidence>
<evidence type="ECO:0007744" key="14">
    <source>
        <dbReference type="PDB" id="2IW1"/>
    </source>
</evidence>
<evidence type="ECO:0007744" key="15">
    <source>
        <dbReference type="PDB" id="2N58"/>
    </source>
</evidence>
<evidence type="ECO:0007829" key="16">
    <source>
        <dbReference type="PDB" id="2IW1"/>
    </source>
</evidence>
<feature type="chain" id="PRO_0000080305" description="Lipopolysaccharide glucosyltransferase WaaG">
    <location>
        <begin position="1"/>
        <end position="374"/>
    </location>
</feature>
<feature type="region of interest" description="Membrane-interacting region" evidence="3">
    <location>
        <begin position="103"/>
        <end position="132"/>
    </location>
</feature>
<feature type="binding site" evidence="10 13 14">
    <location>
        <position position="15"/>
    </location>
    <ligand>
        <name>UDP-alpha-D-glucose</name>
        <dbReference type="ChEBI" id="CHEBI:58885"/>
    </ligand>
</feature>
<feature type="binding site" evidence="10 14">
    <location>
        <position position="19"/>
    </location>
    <ligand>
        <name>UDP-alpha-D-glucose</name>
        <dbReference type="ChEBI" id="CHEBI:58885"/>
    </ligand>
</feature>
<feature type="binding site" evidence="10 13 14">
    <location>
        <position position="173"/>
    </location>
    <ligand>
        <name>UDP-alpha-D-glucose</name>
        <dbReference type="ChEBI" id="CHEBI:58885"/>
    </ligand>
</feature>
<feature type="binding site" evidence="10 13 14">
    <location>
        <position position="208"/>
    </location>
    <ligand>
        <name>UDP-alpha-D-glucose</name>
        <dbReference type="ChEBI" id="CHEBI:58885"/>
    </ligand>
</feature>
<feature type="binding site" evidence="10 13 14">
    <location>
        <position position="209"/>
    </location>
    <ligand>
        <name>UDP-alpha-D-glucose</name>
        <dbReference type="ChEBI" id="CHEBI:58885"/>
    </ligand>
</feature>
<feature type="binding site" evidence="10 13 14">
    <location>
        <position position="261"/>
    </location>
    <ligand>
        <name>UDP-alpha-D-glucose</name>
        <dbReference type="ChEBI" id="CHEBI:58885"/>
    </ligand>
</feature>
<feature type="binding site" evidence="10 14">
    <location>
        <position position="281"/>
    </location>
    <ligand>
        <name>UDP-alpha-D-glucose</name>
        <dbReference type="ChEBI" id="CHEBI:58885"/>
    </ligand>
</feature>
<feature type="binding site" evidence="10 14">
    <location>
        <position position="283"/>
    </location>
    <ligand>
        <name>UDP-alpha-D-glucose</name>
        <dbReference type="ChEBI" id="CHEBI:58885"/>
    </ligand>
</feature>
<feature type="binding site" evidence="10 14">
    <location>
        <position position="284"/>
    </location>
    <ligand>
        <name>UDP-alpha-D-glucose</name>
        <dbReference type="ChEBI" id="CHEBI:58885"/>
    </ligand>
</feature>
<feature type="binding site" evidence="10 13 14">
    <location>
        <position position="285"/>
    </location>
    <ligand>
        <name>UDP-alpha-D-glucose</name>
        <dbReference type="ChEBI" id="CHEBI:58885"/>
    </ligand>
</feature>
<feature type="binding site" evidence="10 13 14">
    <location>
        <position position="286"/>
    </location>
    <ligand>
        <name>UDP-alpha-D-glucose</name>
        <dbReference type="ChEBI" id="CHEBI:58885"/>
    </ligand>
</feature>
<feature type="binding site" evidence="10 13 14">
    <location>
        <position position="289"/>
    </location>
    <ligand>
        <name>UDP-alpha-D-glucose</name>
        <dbReference type="ChEBI" id="CHEBI:58885"/>
    </ligand>
</feature>
<feature type="strand" evidence="16">
    <location>
        <begin position="3"/>
        <end position="6"/>
    </location>
</feature>
<feature type="strand" evidence="16">
    <location>
        <begin position="8"/>
        <end position="10"/>
    </location>
</feature>
<feature type="helix" evidence="16">
    <location>
        <begin position="15"/>
        <end position="29"/>
    </location>
</feature>
<feature type="strand" evidence="16">
    <location>
        <begin position="34"/>
        <end position="41"/>
    </location>
</feature>
<feature type="strand" evidence="16">
    <location>
        <begin position="50"/>
        <end position="53"/>
    </location>
</feature>
<feature type="helix" evidence="16">
    <location>
        <begin position="61"/>
        <end position="78"/>
    </location>
</feature>
<feature type="strand" evidence="16">
    <location>
        <begin position="82"/>
        <end position="88"/>
    </location>
</feature>
<feature type="strand" evidence="16">
    <location>
        <begin position="94"/>
        <end position="97"/>
    </location>
</feature>
<feature type="helix" evidence="16">
    <location>
        <begin position="103"/>
        <end position="110"/>
    </location>
</feature>
<feature type="helix" evidence="16">
    <location>
        <begin position="113"/>
        <end position="116"/>
    </location>
</feature>
<feature type="helix" evidence="16">
    <location>
        <begin position="119"/>
        <end position="132"/>
    </location>
</feature>
<feature type="strand" evidence="16">
    <location>
        <begin position="139"/>
        <end position="143"/>
    </location>
</feature>
<feature type="helix" evidence="16">
    <location>
        <begin position="145"/>
        <end position="155"/>
    </location>
</feature>
<feature type="helix" evidence="16">
    <location>
        <begin position="159"/>
        <end position="161"/>
    </location>
</feature>
<feature type="strand" evidence="16">
    <location>
        <begin position="162"/>
        <end position="164"/>
    </location>
</feature>
<feature type="helix" evidence="16">
    <location>
        <begin position="171"/>
        <end position="173"/>
    </location>
</feature>
<feature type="helix" evidence="16">
    <location>
        <begin position="175"/>
        <end position="177"/>
    </location>
</feature>
<feature type="helix" evidence="16">
    <location>
        <begin position="182"/>
        <end position="189"/>
    </location>
</feature>
<feature type="strand" evidence="16">
    <location>
        <begin position="197"/>
        <end position="202"/>
    </location>
</feature>
<feature type="turn" evidence="16">
    <location>
        <begin position="206"/>
        <end position="210"/>
    </location>
</feature>
<feature type="helix" evidence="16">
    <location>
        <begin position="211"/>
        <end position="219"/>
    </location>
</feature>
<feature type="helix" evidence="16">
    <location>
        <begin position="223"/>
        <end position="227"/>
    </location>
</feature>
<feature type="strand" evidence="16">
    <location>
        <begin position="229"/>
        <end position="237"/>
    </location>
</feature>
<feature type="helix" evidence="16">
    <location>
        <begin position="240"/>
        <end position="248"/>
    </location>
</feature>
<feature type="helix" evidence="16">
    <location>
        <begin position="252"/>
        <end position="254"/>
    </location>
</feature>
<feature type="strand" evidence="16">
    <location>
        <begin position="255"/>
        <end position="259"/>
    </location>
</feature>
<feature type="helix" evidence="16">
    <location>
        <begin position="264"/>
        <end position="270"/>
    </location>
</feature>
<feature type="strand" evidence="16">
    <location>
        <begin position="272"/>
        <end position="276"/>
    </location>
</feature>
<feature type="helix" evidence="16">
    <location>
        <begin position="285"/>
        <end position="293"/>
    </location>
</feature>
<feature type="strand" evidence="16">
    <location>
        <begin position="297"/>
        <end position="300"/>
    </location>
</feature>
<feature type="turn" evidence="16">
    <location>
        <begin position="304"/>
        <end position="306"/>
    </location>
</feature>
<feature type="helix" evidence="16">
    <location>
        <begin position="307"/>
        <end position="312"/>
    </location>
</feature>
<feature type="strand" evidence="16">
    <location>
        <begin position="315"/>
        <end position="318"/>
    </location>
</feature>
<feature type="helix" evidence="16">
    <location>
        <begin position="324"/>
        <end position="336"/>
    </location>
</feature>
<feature type="helix" evidence="16">
    <location>
        <begin position="338"/>
        <end position="354"/>
    </location>
</feature>
<feature type="helix" evidence="16">
    <location>
        <begin position="360"/>
        <end position="369"/>
    </location>
</feature>